<feature type="chain" id="PRO_1000087946" description="UPF0502 protein YceH">
    <location>
        <begin position="1"/>
        <end position="215"/>
    </location>
</feature>
<proteinExistence type="inferred from homology"/>
<gene>
    <name evidence="1" type="primary">yceH</name>
    <name type="ordered locus">SPAB_02361</name>
</gene>
<accession>A9N5P3</accession>
<dbReference type="EMBL" id="CP000886">
    <property type="protein sequence ID" value="ABX67743.1"/>
    <property type="molecule type" value="Genomic_DNA"/>
</dbReference>
<dbReference type="RefSeq" id="WP_000873047.1">
    <property type="nucleotide sequence ID" value="NC_010102.1"/>
</dbReference>
<dbReference type="SMR" id="A9N5P3"/>
<dbReference type="KEGG" id="spq:SPAB_02361"/>
<dbReference type="PATRIC" id="fig|1016998.12.peg.2233"/>
<dbReference type="HOGENOM" id="CLU_057831_2_0_6"/>
<dbReference type="BioCyc" id="SENT1016998:SPAB_RS09615-MONOMER"/>
<dbReference type="Proteomes" id="UP000008556">
    <property type="component" value="Chromosome"/>
</dbReference>
<dbReference type="FunFam" id="1.10.10.10:FF:000196">
    <property type="entry name" value="UPF0502 protein YceH"/>
    <property type="match status" value="1"/>
</dbReference>
<dbReference type="Gene3D" id="1.10.10.10">
    <property type="entry name" value="Winged helix-like DNA-binding domain superfamily/Winged helix DNA-binding domain"/>
    <property type="match status" value="2"/>
</dbReference>
<dbReference type="HAMAP" id="MF_01584">
    <property type="entry name" value="UPF0502"/>
    <property type="match status" value="1"/>
</dbReference>
<dbReference type="InterPro" id="IPR007432">
    <property type="entry name" value="DUF480"/>
</dbReference>
<dbReference type="InterPro" id="IPR036388">
    <property type="entry name" value="WH-like_DNA-bd_sf"/>
</dbReference>
<dbReference type="InterPro" id="IPR036390">
    <property type="entry name" value="WH_DNA-bd_sf"/>
</dbReference>
<dbReference type="NCBIfam" id="NF008413">
    <property type="entry name" value="PRK11239.1"/>
    <property type="match status" value="1"/>
</dbReference>
<dbReference type="PANTHER" id="PTHR38768">
    <property type="entry name" value="UPF0502 PROTEIN YCEH"/>
    <property type="match status" value="1"/>
</dbReference>
<dbReference type="PANTHER" id="PTHR38768:SF1">
    <property type="entry name" value="UPF0502 PROTEIN YCEH"/>
    <property type="match status" value="1"/>
</dbReference>
<dbReference type="Pfam" id="PF04337">
    <property type="entry name" value="DUF480"/>
    <property type="match status" value="1"/>
</dbReference>
<dbReference type="SUPFAM" id="SSF46785">
    <property type="entry name" value="Winged helix' DNA-binding domain"/>
    <property type="match status" value="2"/>
</dbReference>
<evidence type="ECO:0000255" key="1">
    <source>
        <dbReference type="HAMAP-Rule" id="MF_01584"/>
    </source>
</evidence>
<protein>
    <recommendedName>
        <fullName evidence="1">UPF0502 protein YceH</fullName>
    </recommendedName>
</protein>
<reference key="1">
    <citation type="submission" date="2007-11" db="EMBL/GenBank/DDBJ databases">
        <authorList>
            <consortium name="The Salmonella enterica serovar Paratyphi B Genome Sequencing Project"/>
            <person name="McClelland M."/>
            <person name="Sanderson E.K."/>
            <person name="Porwollik S."/>
            <person name="Spieth J."/>
            <person name="Clifton W.S."/>
            <person name="Fulton R."/>
            <person name="Cordes M."/>
            <person name="Wollam A."/>
            <person name="Shah N."/>
            <person name="Pepin K."/>
            <person name="Bhonagiri V."/>
            <person name="Nash W."/>
            <person name="Johnson M."/>
            <person name="Thiruvilangam P."/>
            <person name="Wilson R."/>
        </authorList>
    </citation>
    <scope>NUCLEOTIDE SEQUENCE [LARGE SCALE GENOMIC DNA]</scope>
    <source>
        <strain>ATCC BAA-1250 / SPB7</strain>
    </source>
</reference>
<sequence>MKYELTATEARVIGCLLEKQVTTPEQYPLSVNGVVTACNQKTNREPVMNLTEQEVQEQLDNLVKRHFLRTVSGFGNRVTKYEQRFCNSEFGDLKLSAAEVALVTTLLLRGAQTPGELRSRASRMHEFSDMAEVESTLERLASREDGPYVVRLAREPGKRESRYMHLFCGDVDELSLQTSAPESASGDLQSRVEALESEVAELKQRLDSLLAHLGE</sequence>
<name>YCEH_SALPB</name>
<comment type="similarity">
    <text evidence="1">Belongs to the UPF0502 family.</text>
</comment>
<organism>
    <name type="scientific">Salmonella paratyphi B (strain ATCC BAA-1250 / SPB7)</name>
    <dbReference type="NCBI Taxonomy" id="1016998"/>
    <lineage>
        <taxon>Bacteria</taxon>
        <taxon>Pseudomonadati</taxon>
        <taxon>Pseudomonadota</taxon>
        <taxon>Gammaproteobacteria</taxon>
        <taxon>Enterobacterales</taxon>
        <taxon>Enterobacteriaceae</taxon>
        <taxon>Salmonella</taxon>
    </lineage>
</organism>